<reference key="1">
    <citation type="journal article" date="1989" name="Nucleic Acids Res.">
        <title>Coding sequences of human ralA and ralB cDNAs.</title>
        <authorList>
            <person name="Chardin P."/>
            <person name="Tavitian A."/>
        </authorList>
    </citation>
    <scope>NUCLEOTIDE SEQUENCE [MRNA]</scope>
</reference>
<reference key="2">
    <citation type="journal article" date="1989" name="J. Biol. Chem.">
        <title>Identification of the ral and rac1 gene products, low molecular mass GTP-binding proteins from human platelets.</title>
        <authorList>
            <person name="Polakis P.G."/>
            <person name="Weber R.F."/>
            <person name="Nevins B."/>
            <person name="Didsbury J.R."/>
            <person name="Evans T."/>
            <person name="Snyderman R."/>
        </authorList>
    </citation>
    <scope>NUCLEOTIDE SEQUENCE [MRNA]</scope>
    <source>
        <tissue>Platelet</tissue>
    </source>
</reference>
<reference key="3">
    <citation type="submission" date="2002-03" db="EMBL/GenBank/DDBJ databases">
        <title>cDNA clones of human proteins involved in signal transduction sequenced by the Guthrie cDNA resource center (www.cdna.org).</title>
        <authorList>
            <person name="Puhl H.L. III"/>
            <person name="Ikeda S.R."/>
            <person name="Aronstam R.S."/>
        </authorList>
    </citation>
    <scope>NUCLEOTIDE SEQUENCE [LARGE SCALE MRNA]</scope>
    <source>
        <tissue>Lung</tissue>
    </source>
</reference>
<reference key="4">
    <citation type="journal article" date="2003" name="Science">
        <title>Human chromosome 7: DNA sequence and biology.</title>
        <authorList>
            <person name="Scherer S.W."/>
            <person name="Cheung J."/>
            <person name="MacDonald J.R."/>
            <person name="Osborne L.R."/>
            <person name="Nakabayashi K."/>
            <person name="Herbrick J.-A."/>
            <person name="Carson A.R."/>
            <person name="Parker-Katiraee L."/>
            <person name="Skaug J."/>
            <person name="Khaja R."/>
            <person name="Zhang J."/>
            <person name="Hudek A.K."/>
            <person name="Li M."/>
            <person name="Haddad M."/>
            <person name="Duggan G.E."/>
            <person name="Fernandez B.A."/>
            <person name="Kanematsu E."/>
            <person name="Gentles S."/>
            <person name="Christopoulos C.C."/>
            <person name="Choufani S."/>
            <person name="Kwasnicka D."/>
            <person name="Zheng X.H."/>
            <person name="Lai Z."/>
            <person name="Nusskern D.R."/>
            <person name="Zhang Q."/>
            <person name="Gu Z."/>
            <person name="Lu F."/>
            <person name="Zeesman S."/>
            <person name="Nowaczyk M.J."/>
            <person name="Teshima I."/>
            <person name="Chitayat D."/>
            <person name="Shuman C."/>
            <person name="Weksberg R."/>
            <person name="Zackai E.H."/>
            <person name="Grebe T.A."/>
            <person name="Cox S.R."/>
            <person name="Kirkpatrick S.J."/>
            <person name="Rahman N."/>
            <person name="Friedman J.M."/>
            <person name="Heng H.H.Q."/>
            <person name="Pelicci P.G."/>
            <person name="Lo-Coco F."/>
            <person name="Belloni E."/>
            <person name="Shaffer L.G."/>
            <person name="Pober B."/>
            <person name="Morton C.C."/>
            <person name="Gusella J.F."/>
            <person name="Bruns G.A.P."/>
            <person name="Korf B.R."/>
            <person name="Quade B.J."/>
            <person name="Ligon A.H."/>
            <person name="Ferguson H."/>
            <person name="Higgins A.W."/>
            <person name="Leach N.T."/>
            <person name="Herrick S.R."/>
            <person name="Lemyre E."/>
            <person name="Farra C.G."/>
            <person name="Kim H.-G."/>
            <person name="Summers A.M."/>
            <person name="Gripp K.W."/>
            <person name="Roberts W."/>
            <person name="Szatmari P."/>
            <person name="Winsor E.J.T."/>
            <person name="Grzeschik K.-H."/>
            <person name="Teebi A."/>
            <person name="Minassian B.A."/>
            <person name="Kere J."/>
            <person name="Armengol L."/>
            <person name="Pujana M.A."/>
            <person name="Estivill X."/>
            <person name="Wilson M.D."/>
            <person name="Koop B.F."/>
            <person name="Tosi S."/>
            <person name="Moore G.E."/>
            <person name="Boright A.P."/>
            <person name="Zlotorynski E."/>
            <person name="Kerem B."/>
            <person name="Kroisel P.M."/>
            <person name="Petek E."/>
            <person name="Oscier D.G."/>
            <person name="Mould S.J."/>
            <person name="Doehner H."/>
            <person name="Doehner K."/>
            <person name="Rommens J.M."/>
            <person name="Vincent J.B."/>
            <person name="Venter J.C."/>
            <person name="Li P.W."/>
            <person name="Mural R.J."/>
            <person name="Adams M.D."/>
            <person name="Tsui L.-C."/>
        </authorList>
    </citation>
    <scope>NUCLEOTIDE SEQUENCE [LARGE SCALE GENOMIC DNA]</scope>
</reference>
<reference key="5">
    <citation type="submission" date="2005-07" db="EMBL/GenBank/DDBJ databases">
        <authorList>
            <person name="Mural R.J."/>
            <person name="Istrail S."/>
            <person name="Sutton G.G."/>
            <person name="Florea L."/>
            <person name="Halpern A.L."/>
            <person name="Mobarry C.M."/>
            <person name="Lippert R."/>
            <person name="Walenz B."/>
            <person name="Shatkay H."/>
            <person name="Dew I."/>
            <person name="Miller J.R."/>
            <person name="Flanigan M.J."/>
            <person name="Edwards N.J."/>
            <person name="Bolanos R."/>
            <person name="Fasulo D."/>
            <person name="Halldorsson B.V."/>
            <person name="Hannenhalli S."/>
            <person name="Turner R."/>
            <person name="Yooseph S."/>
            <person name="Lu F."/>
            <person name="Nusskern D.R."/>
            <person name="Shue B.C."/>
            <person name="Zheng X.H."/>
            <person name="Zhong F."/>
            <person name="Delcher A.L."/>
            <person name="Huson D.H."/>
            <person name="Kravitz S.A."/>
            <person name="Mouchard L."/>
            <person name="Reinert K."/>
            <person name="Remington K.A."/>
            <person name="Clark A.G."/>
            <person name="Waterman M.S."/>
            <person name="Eichler E.E."/>
            <person name="Adams M.D."/>
            <person name="Hunkapiller M.W."/>
            <person name="Myers E.W."/>
            <person name="Venter J.C."/>
        </authorList>
    </citation>
    <scope>NUCLEOTIDE SEQUENCE [LARGE SCALE GENOMIC DNA]</scope>
</reference>
<reference key="6">
    <citation type="journal article" date="2003" name="Nature">
        <title>The DNA sequence of human chromosome 7.</title>
        <authorList>
            <person name="Hillier L.W."/>
            <person name="Fulton R.S."/>
            <person name="Fulton L.A."/>
            <person name="Graves T.A."/>
            <person name="Pepin K.H."/>
            <person name="Wagner-McPherson C."/>
            <person name="Layman D."/>
            <person name="Maas J."/>
            <person name="Jaeger S."/>
            <person name="Walker R."/>
            <person name="Wylie K."/>
            <person name="Sekhon M."/>
            <person name="Becker M.C."/>
            <person name="O'Laughlin M.D."/>
            <person name="Schaller M.E."/>
            <person name="Fewell G.A."/>
            <person name="Delehaunty K.D."/>
            <person name="Miner T.L."/>
            <person name="Nash W.E."/>
            <person name="Cordes M."/>
            <person name="Du H."/>
            <person name="Sun H."/>
            <person name="Edwards J."/>
            <person name="Bradshaw-Cordum H."/>
            <person name="Ali J."/>
            <person name="Andrews S."/>
            <person name="Isak A."/>
            <person name="Vanbrunt A."/>
            <person name="Nguyen C."/>
            <person name="Du F."/>
            <person name="Lamar B."/>
            <person name="Courtney L."/>
            <person name="Kalicki J."/>
            <person name="Ozersky P."/>
            <person name="Bielicki L."/>
            <person name="Scott K."/>
            <person name="Holmes A."/>
            <person name="Harkins R."/>
            <person name="Harris A."/>
            <person name="Strong C.M."/>
            <person name="Hou S."/>
            <person name="Tomlinson C."/>
            <person name="Dauphin-Kohlberg S."/>
            <person name="Kozlowicz-Reilly A."/>
            <person name="Leonard S."/>
            <person name="Rohlfing T."/>
            <person name="Rock S.M."/>
            <person name="Tin-Wollam A.-M."/>
            <person name="Abbott A."/>
            <person name="Minx P."/>
            <person name="Maupin R."/>
            <person name="Strowmatt C."/>
            <person name="Latreille P."/>
            <person name="Miller N."/>
            <person name="Johnson D."/>
            <person name="Murray J."/>
            <person name="Woessner J.P."/>
            <person name="Wendl M.C."/>
            <person name="Yang S.-P."/>
            <person name="Schultz B.R."/>
            <person name="Wallis J.W."/>
            <person name="Spieth J."/>
            <person name="Bieri T.A."/>
            <person name="Nelson J.O."/>
            <person name="Berkowicz N."/>
            <person name="Wohldmann P.E."/>
            <person name="Cook L.L."/>
            <person name="Hickenbotham M.T."/>
            <person name="Eldred J."/>
            <person name="Williams D."/>
            <person name="Bedell J.A."/>
            <person name="Mardis E.R."/>
            <person name="Clifton S.W."/>
            <person name="Chissoe S.L."/>
            <person name="Marra M.A."/>
            <person name="Raymond C."/>
            <person name="Haugen E."/>
            <person name="Gillett W."/>
            <person name="Zhou Y."/>
            <person name="James R."/>
            <person name="Phelps K."/>
            <person name="Iadanoto S."/>
            <person name="Bubb K."/>
            <person name="Simms E."/>
            <person name="Levy R."/>
            <person name="Clendenning J."/>
            <person name="Kaul R."/>
            <person name="Kent W.J."/>
            <person name="Furey T.S."/>
            <person name="Baertsch R.A."/>
            <person name="Brent M.R."/>
            <person name="Keibler E."/>
            <person name="Flicek P."/>
            <person name="Bork P."/>
            <person name="Suyama M."/>
            <person name="Bailey J.A."/>
            <person name="Portnoy M.E."/>
            <person name="Torrents D."/>
            <person name="Chinwalla A.T."/>
            <person name="Gish W.R."/>
            <person name="Eddy S.R."/>
            <person name="McPherson J.D."/>
            <person name="Olson M.V."/>
            <person name="Eichler E.E."/>
            <person name="Green E.D."/>
            <person name="Waterston R.H."/>
            <person name="Wilson R.K."/>
        </authorList>
    </citation>
    <scope>NUCLEOTIDE SEQUENCE [LARGE SCALE GENOMIC DNA]</scope>
</reference>
<reference key="7">
    <citation type="journal article" date="2004" name="Genome Res.">
        <title>The status, quality, and expansion of the NIH full-length cDNA project: the Mammalian Gene Collection (MGC).</title>
        <authorList>
            <consortium name="The MGC Project Team"/>
        </authorList>
    </citation>
    <scope>NUCLEOTIDE SEQUENCE [LARGE SCALE MRNA]</scope>
    <source>
        <tissue>Eye</tissue>
    </source>
</reference>
<reference key="8">
    <citation type="journal article" date="1991" name="J. Biol. Chem.">
        <title>Carboxyl-terminal isoprenylation of ras-related GTP-binding proteins encoded by rac1, rac2, and ralA.</title>
        <authorList>
            <person name="Kinsella B.T."/>
            <person name="Erdman R.A."/>
            <person name="Maltese W.A."/>
        </authorList>
    </citation>
    <scope>ISOPRENYLATION AT CYS-203</scope>
</reference>
<reference key="9">
    <citation type="journal article" date="1995" name="J. Biol. Chem.">
        <title>Bridging Ral GTPase to Rho pathways. RLIP76, a Ral effector with CDC42/Rac GTPase-activating protein activity.</title>
        <authorList>
            <person name="Jullien-Flores V."/>
            <person name="Dorseuil O."/>
            <person name="Romero F."/>
            <person name="Letourneur F."/>
            <person name="Saragosti S."/>
            <person name="Berger R."/>
            <person name="Tavitian A."/>
            <person name="Gacon G."/>
            <person name="Camonis J.H."/>
        </authorList>
    </citation>
    <scope>INTERACTION WITH RALBP1</scope>
</reference>
<reference key="10">
    <citation type="journal article" date="1996" name="Biochem. Biophys. Res. Commun.">
        <title>The ras-related protein Ral is monoglucosylated by Clostridium sordellii lethal toxin.</title>
        <authorList>
            <person name="Hofmann F."/>
            <person name="Rex G."/>
            <person name="Aktories K."/>
            <person name="Just I."/>
        </authorList>
    </citation>
    <scope>GLYCOSYLATION AT THR-46 (MICROBIAL INFECTION)</scope>
    <scope>MUTAGENESIS OF THR-46</scope>
</reference>
<reference key="11">
    <citation type="journal article" date="2000" name="J. Biol. Chem.">
        <title>Identification and characterization of a new family of guanine nucleotide exchange factors for the ras-related GTPase Ral.</title>
        <authorList>
            <person name="Rebhun J.F."/>
            <person name="Chen H."/>
            <person name="Quilliam L.A."/>
        </authorList>
    </citation>
    <scope>INTERACTION WITH RALGPS1</scope>
</reference>
<reference key="12">
    <citation type="journal article" date="2003" name="J. Biol. Chem.">
        <title>Ral GTPases regulate exocyst assembly through dual subunit interactions.</title>
        <authorList>
            <person name="Moskalenko S."/>
            <person name="Tong C."/>
            <person name="Rosse C."/>
            <person name="Mirey G."/>
            <person name="Formstecher E."/>
            <person name="Daviet L."/>
            <person name="Camonis J."/>
            <person name="White M.A."/>
        </authorList>
    </citation>
    <scope>INTERACTION WITH EXOC8</scope>
</reference>
<reference key="13">
    <citation type="journal article" date="2005" name="Cell">
        <title>Centriolin anchoring of exocyst and SNARE complexes at the midbody is required for secretory-vesicle-mediated abscission.</title>
        <authorList>
            <person name="Gromley A."/>
            <person name="Yeaman C."/>
            <person name="Rosa J."/>
            <person name="Redick S."/>
            <person name="Chen C.-T."/>
            <person name="Mirabelle S."/>
            <person name="Guha M."/>
            <person name="Sillibourne J."/>
            <person name="Doxsey S.J."/>
        </authorList>
    </citation>
    <scope>SUBCELLULAR LOCATION</scope>
</reference>
<reference key="14">
    <citation type="journal article" date="2007" name="Mol. Cell. Biol.">
        <title>Geranylgeranyltransferase I inhibitors target RalB to inhibit anchorage-dependent growth and induce apoptosis and RalA to inhibit anchorage-independent growth.</title>
        <authorList>
            <person name="Falsetti S.C."/>
            <person name="Wang D.A."/>
            <person name="Peng H."/>
            <person name="Carrico D."/>
            <person name="Cox A.D."/>
            <person name="Der C.J."/>
            <person name="Hamilton A.D."/>
            <person name="Sebti S.M."/>
        </authorList>
    </citation>
    <scope>SUBCELLULAR LOCATION</scope>
    <scope>ISOPRENYLATION AT CYS-203</scope>
    <scope>MUTAGENESIS OF CYS-203 AND LEU-206</scope>
</reference>
<reference key="15">
    <citation type="journal article" date="2008" name="EMBO J.">
        <title>Distinct roles of RalA and RalB in the progression of cytokinesis are supported by distinct RalGEFs.</title>
        <authorList>
            <person name="Cascone I."/>
            <person name="Selimoglu R."/>
            <person name="Ozdemir C."/>
            <person name="Del Nery E."/>
            <person name="Yeaman C."/>
            <person name="White M."/>
            <person name="Camonis J."/>
        </authorList>
    </citation>
    <scope>FUNCTION</scope>
    <scope>INTERACTION WITH EXOC2 AND EXOC8</scope>
    <scope>SUBCELLULAR LOCATION</scope>
    <scope>MUTAGENESIS OF 1-MET--SER-11; GLY-23; GLU-38; ALA-48; ASP-49 AND GLN-72</scope>
</reference>
<reference key="16">
    <citation type="journal article" date="2009" name="Cell. Signal.">
        <title>Dual regulation of lysophosphatidic acid (LPA1) receptor signalling by Ral and GRK.</title>
        <authorList>
            <person name="Aziziyeh A.I."/>
            <person name="Li T.T."/>
            <person name="Pape C."/>
            <person name="Pampillo M."/>
            <person name="Chidiac P."/>
            <person name="Possmayer F."/>
            <person name="Babwah A.V."/>
            <person name="Bhattacharya M."/>
        </authorList>
    </citation>
    <scope>FUNCTION</scope>
    <scope>SUBCELLULAR LOCATION</scope>
    <scope>INDUCTION</scope>
    <scope>INTERACTION WITH LPAR1; LPAR2 AND GRK2</scope>
</reference>
<reference key="17">
    <citation type="journal article" date="2010" name="Curr. Biol.">
        <title>RalA-exocyst complex regulates integrin-dependent membrane raft exocytosis and growth signaling.</title>
        <authorList>
            <person name="Balasubramanian N."/>
            <person name="Meier J.A."/>
            <person name="Scott D.W."/>
            <person name="Norambuena A."/>
            <person name="White M.A."/>
            <person name="Schwartz M.A."/>
        </authorList>
    </citation>
    <scope>FUNCTION</scope>
</reference>
<reference key="18">
    <citation type="journal article" date="2011" name="BMC Syst. Biol.">
        <title>Initial characterization of the human central proteome.</title>
        <authorList>
            <person name="Burkard T.R."/>
            <person name="Planyavsky M."/>
            <person name="Kaupe I."/>
            <person name="Breitwieser F.P."/>
            <person name="Buerckstuemmer T."/>
            <person name="Bennett K.L."/>
            <person name="Superti-Furga G."/>
            <person name="Colinge J."/>
        </authorList>
    </citation>
    <scope>IDENTIFICATION BY MASS SPECTROMETRY [LARGE SCALE ANALYSIS]</scope>
</reference>
<reference key="19">
    <citation type="journal article" date="2011" name="Nat. Cell Biol.">
        <title>RALA and RALBP1 regulate mitochondrial fission at mitosis.</title>
        <authorList>
            <person name="Kashatus D.F."/>
            <person name="Lim K.H."/>
            <person name="Brady D.C."/>
            <person name="Pershing N.L."/>
            <person name="Cox A.D."/>
            <person name="Counter C.M."/>
        </authorList>
    </citation>
    <scope>FUNCTION</scope>
    <scope>INTERACTION WITH RALBP1</scope>
    <scope>PHOSPHORYLATION AT SER-194</scope>
    <scope>SUBCELLULAR LOCATION</scope>
    <scope>MUTAGENESIS OF SER-194</scope>
</reference>
<reference key="20">
    <citation type="journal article" date="2015" name="Proteomics">
        <title>N-terminome analysis of the human mitochondrial proteome.</title>
        <authorList>
            <person name="Vaca Jacome A.S."/>
            <person name="Rabilloud T."/>
            <person name="Schaeffer-Reiss C."/>
            <person name="Rompais M."/>
            <person name="Ayoub D."/>
            <person name="Lane L."/>
            <person name="Bairoch A."/>
            <person name="Van Dorsselaer A."/>
            <person name="Carapito C."/>
        </authorList>
    </citation>
    <scope>IDENTIFICATION BY MASS SPECTROMETRY [LARGE SCALE ANALYSIS]</scope>
</reference>
<reference key="21">
    <citation type="journal article" date="2018" name="PLoS Genet.">
        <title>De novo mutations in the GTP/GDP-binding region of RALA, a RAS-like small GTPase, cause intellectual disability and developmental delay.</title>
        <authorList>
            <person name="Hiatt S.M."/>
            <person name="Neu M.B."/>
            <person name="Ramaker R.C."/>
            <person name="Hardigan A.A."/>
            <person name="Prokop J.W."/>
            <person name="Hancarova M."/>
            <person name="Prchalova D."/>
            <person name="Havlovicova M."/>
            <person name="Prchal J."/>
            <person name="Stranecky V."/>
            <person name="Yim D.K.C."/>
            <person name="Powis Z."/>
            <person name="Keren B."/>
            <person name="Nava C."/>
            <person name="Mignot C."/>
            <person name="Rio M."/>
            <person name="Revah-Politi A."/>
            <person name="Hemati P."/>
            <person name="Stong N."/>
            <person name="Iglesias A.D."/>
            <person name="Suchy S.F."/>
            <person name="Willaert R."/>
            <person name="Wentzensen I.M."/>
            <person name="Wheeler P.G."/>
            <person name="Brick L."/>
            <person name="Kozenko M."/>
            <person name="Hurst A.C.E."/>
            <person name="Wheless J.W."/>
            <person name="Lacassie Y."/>
            <person name="Myers R.M."/>
            <person name="Barsh G.S."/>
            <person name="Sedlacek Z."/>
            <person name="Cooper G.M."/>
        </authorList>
    </citation>
    <scope>INVOLVEMENT IN HINCONS</scope>
    <scope>VARIANTS HINCONS LEU-25; MET-25; ARG-128; GLY-130; ALA-157; ALA-158 DEL AND 176-ARG--LEU-206 DEL</scope>
    <scope>CHARACTERIZATION OF VARIANTS HINCONS LEU-25; MET-25; GLY-130; ALA-157 AND 176-ARG--LEU-206 DEL</scope>
    <scope>FUNCTION</scope>
    <scope>CATALYTIC ACTIVITY</scope>
</reference>
<reference key="22">
    <citation type="journal article" date="2019" name="Congenit. Anom. (Kyoto)">
        <title>RALA mutation in a patient with autism spectrum disorder and Noonan syndrome-like phenotype.</title>
        <authorList>
            <person name="Okamoto N."/>
            <person name="Takata A."/>
            <person name="Miyake N."/>
            <person name="Matsumoto N."/>
        </authorList>
    </citation>
    <scope>VARIANT HINCONS MET-25</scope>
</reference>
<reference key="23">
    <citation type="journal article" date="2005" name="EMBO J.">
        <title>Exo84 and Sec5 are competitive regulatory Sec6/8 effectors to the RalA GTPase.</title>
        <authorList>
            <person name="Jin R."/>
            <person name="Junutula J.R."/>
            <person name="Matern H.T."/>
            <person name="Ervin K.E."/>
            <person name="Scheller R.H."/>
            <person name="Brunger A.T."/>
        </authorList>
    </citation>
    <scope>X-RAY CRYSTALLOGRAPHY (2.0 ANGSTROMS) OF 9-183 IN COMPLEX WITH EXOC8 AND GTP ANALOG</scope>
    <scope>INTERACTION WITH EXOC2</scope>
    <scope>MUTAGENESIS OF LYS-47; ALA-48; SER-50; ARG-52 AND ASN-81</scope>
</reference>
<reference key="24">
    <citation type="journal article" date="2005" name="EMBO J.">
        <title>Crystal structure of the C3bot-RalA complex reveals a novel type of action of a bacterial exoenzyme.</title>
        <authorList>
            <person name="Pautsch A."/>
            <person name="Vogelsgesang M."/>
            <person name="Traenkle J."/>
            <person name="Herrmann C."/>
            <person name="Aktories K."/>
        </authorList>
    </citation>
    <scope>X-RAY CRYSTALLOGRAPHY (1.8 ANGSTROMS) OF 9-183 IN COMPLEX WITH GTP AND CLOSTRIDIUM EXOENZYME C3</scope>
</reference>
<reference key="25">
    <citation type="journal article" date="2005" name="Proc. Natl. Acad. Sci. U.S.A.">
        <title>Molecular recognition of an ADP-ribosylating Clostridium botulinum C3 exoenzyme by RalA GTPase.</title>
        <authorList>
            <person name="Holbourn K.P."/>
            <person name="Sutton J.M."/>
            <person name="Evans H.R."/>
            <person name="Shone C.C."/>
            <person name="Acharya K.R."/>
        </authorList>
    </citation>
    <scope>X-RAY CRYSTALLOGRAPHY (2.66 ANGSTROMS) IN COMPLEX WITH GTP AND CLOSTRIDIUM EXOENZYME C3</scope>
</reference>
<name>RALA_HUMAN</name>
<dbReference type="EC" id="3.6.5.2" evidence="15"/>
<dbReference type="EMBL" id="X15014">
    <property type="protein sequence ID" value="CAA33118.1"/>
    <property type="molecule type" value="mRNA"/>
</dbReference>
<dbReference type="EMBL" id="M29893">
    <property type="protein sequence ID" value="AAA36542.1"/>
    <property type="molecule type" value="mRNA"/>
</dbReference>
<dbReference type="EMBL" id="AF493910">
    <property type="protein sequence ID" value="AAM12624.1"/>
    <property type="molecule type" value="mRNA"/>
</dbReference>
<dbReference type="EMBL" id="AC004837">
    <property type="status" value="NOT_ANNOTATED_CDS"/>
    <property type="molecule type" value="Genomic_DNA"/>
</dbReference>
<dbReference type="EMBL" id="CH236951">
    <property type="protein sequence ID" value="EAL23994.1"/>
    <property type="molecule type" value="Genomic_DNA"/>
</dbReference>
<dbReference type="EMBL" id="CH471073">
    <property type="protein sequence ID" value="EAW94123.1"/>
    <property type="molecule type" value="Genomic_DNA"/>
</dbReference>
<dbReference type="EMBL" id="BC039858">
    <property type="protein sequence ID" value="AAH39858.1"/>
    <property type="molecule type" value="mRNA"/>
</dbReference>
<dbReference type="CCDS" id="CCDS5460.1"/>
<dbReference type="PIR" id="S04596">
    <property type="entry name" value="TVHUAA"/>
</dbReference>
<dbReference type="RefSeq" id="NP_005393.2">
    <property type="nucleotide sequence ID" value="NM_005402.3"/>
</dbReference>
<dbReference type="RefSeq" id="XP_006715825.1">
    <property type="nucleotide sequence ID" value="XM_006715762.2"/>
</dbReference>
<dbReference type="RefSeq" id="XP_011513768.1">
    <property type="nucleotide sequence ID" value="XM_011515466.1"/>
</dbReference>
<dbReference type="RefSeq" id="XP_047276637.1">
    <property type="nucleotide sequence ID" value="XM_047420681.1"/>
</dbReference>
<dbReference type="RefSeq" id="XP_047276638.1">
    <property type="nucleotide sequence ID" value="XM_047420682.1"/>
</dbReference>
<dbReference type="RefSeq" id="XP_054214726.1">
    <property type="nucleotide sequence ID" value="XM_054358751.1"/>
</dbReference>
<dbReference type="RefSeq" id="XP_054214727.1">
    <property type="nucleotide sequence ID" value="XM_054358752.1"/>
</dbReference>
<dbReference type="PDB" id="1UAD">
    <property type="method" value="X-ray"/>
    <property type="resolution" value="2.10 A"/>
    <property type="chains" value="A/B=9-183"/>
</dbReference>
<dbReference type="PDB" id="1ZC3">
    <property type="method" value="X-ray"/>
    <property type="resolution" value="2.00 A"/>
    <property type="chains" value="A/C=9-183"/>
</dbReference>
<dbReference type="PDB" id="1ZC4">
    <property type="method" value="X-ray"/>
    <property type="resolution" value="2.50 A"/>
    <property type="chains" value="A/C=9-183"/>
</dbReference>
<dbReference type="PDB" id="2A78">
    <property type="method" value="X-ray"/>
    <property type="resolution" value="1.81 A"/>
    <property type="chains" value="A=9-183"/>
</dbReference>
<dbReference type="PDB" id="2A9K">
    <property type="method" value="X-ray"/>
    <property type="resolution" value="1.73 A"/>
    <property type="chains" value="A=9-183"/>
</dbReference>
<dbReference type="PDB" id="2BOV">
    <property type="method" value="X-ray"/>
    <property type="resolution" value="2.66 A"/>
    <property type="chains" value="A=1-206"/>
</dbReference>
<dbReference type="PDB" id="6P0I">
    <property type="method" value="X-ray"/>
    <property type="resolution" value="1.18 A"/>
    <property type="chains" value="B=1-178"/>
</dbReference>
<dbReference type="PDB" id="6P0J">
    <property type="method" value="X-ray"/>
    <property type="resolution" value="1.31 A"/>
    <property type="chains" value="B=1-178"/>
</dbReference>
<dbReference type="PDB" id="6P0K">
    <property type="method" value="X-ray"/>
    <property type="resolution" value="1.49 A"/>
    <property type="chains" value="B=1-178"/>
</dbReference>
<dbReference type="PDB" id="6P0L">
    <property type="method" value="X-ray"/>
    <property type="resolution" value="1.30 A"/>
    <property type="chains" value="B=1-178"/>
</dbReference>
<dbReference type="PDB" id="6P0M">
    <property type="method" value="X-ray"/>
    <property type="resolution" value="1.50 A"/>
    <property type="chains" value="B=1-178"/>
</dbReference>
<dbReference type="PDB" id="6P0N">
    <property type="method" value="X-ray"/>
    <property type="resolution" value="1.63 A"/>
    <property type="chains" value="B=1-178"/>
</dbReference>
<dbReference type="PDB" id="6P0O">
    <property type="method" value="X-ray"/>
    <property type="resolution" value="1.54 A"/>
    <property type="chains" value="B=1-178"/>
</dbReference>
<dbReference type="PDB" id="7NQC">
    <property type="method" value="NMR"/>
    <property type="chains" value="B=187-203"/>
</dbReference>
<dbReference type="PDB" id="8FJH">
    <property type="method" value="X-ray"/>
    <property type="resolution" value="1.54 A"/>
    <property type="chains" value="B=1-178"/>
</dbReference>
<dbReference type="PDB" id="8FJI">
    <property type="method" value="X-ray"/>
    <property type="resolution" value="1.48 A"/>
    <property type="chains" value="B=1-178"/>
</dbReference>
<dbReference type="PDBsum" id="1UAD"/>
<dbReference type="PDBsum" id="1ZC3"/>
<dbReference type="PDBsum" id="1ZC4"/>
<dbReference type="PDBsum" id="2A78"/>
<dbReference type="PDBsum" id="2A9K"/>
<dbReference type="PDBsum" id="2BOV"/>
<dbReference type="PDBsum" id="6P0I"/>
<dbReference type="PDBsum" id="6P0J"/>
<dbReference type="PDBsum" id="6P0K"/>
<dbReference type="PDBsum" id="6P0L"/>
<dbReference type="PDBsum" id="6P0M"/>
<dbReference type="PDBsum" id="6P0N"/>
<dbReference type="PDBsum" id="6P0O"/>
<dbReference type="PDBsum" id="7NQC"/>
<dbReference type="PDBsum" id="8FJH"/>
<dbReference type="PDBsum" id="8FJI"/>
<dbReference type="SMR" id="P11233"/>
<dbReference type="BioGRID" id="111834">
    <property type="interactions" value="142"/>
</dbReference>
<dbReference type="FunCoup" id="P11233">
    <property type="interactions" value="2475"/>
</dbReference>
<dbReference type="IntAct" id="P11233">
    <property type="interactions" value="61"/>
</dbReference>
<dbReference type="MINT" id="P11233"/>
<dbReference type="STRING" id="9606.ENSP00000005257"/>
<dbReference type="ChEMBL" id="CHEMBL3879855"/>
<dbReference type="DrugBank" id="DB04315">
    <property type="generic name" value="Guanosine-5'-Diphosphate"/>
</dbReference>
<dbReference type="GlyCosmos" id="P11233">
    <property type="glycosylation" value="1 site, No reported glycans"/>
</dbReference>
<dbReference type="GlyGen" id="P11233">
    <property type="glycosylation" value="2 sites, 1 O-linked glycan (1 site)"/>
</dbReference>
<dbReference type="iPTMnet" id="P11233"/>
<dbReference type="MetOSite" id="P11233"/>
<dbReference type="PhosphoSitePlus" id="P11233"/>
<dbReference type="SwissPalm" id="P11233"/>
<dbReference type="BioMuta" id="RALA"/>
<dbReference type="DMDM" id="131834"/>
<dbReference type="jPOST" id="P11233"/>
<dbReference type="MassIVE" id="P11233"/>
<dbReference type="PaxDb" id="9606-ENSP00000005257"/>
<dbReference type="PeptideAtlas" id="P11233"/>
<dbReference type="ProteomicsDB" id="52726"/>
<dbReference type="Pumba" id="P11233"/>
<dbReference type="Antibodypedia" id="26723">
    <property type="antibodies" value="367 antibodies from 35 providers"/>
</dbReference>
<dbReference type="DNASU" id="5898"/>
<dbReference type="Ensembl" id="ENST00000005257.7">
    <property type="protein sequence ID" value="ENSP00000005257.2"/>
    <property type="gene ID" value="ENSG00000006451.8"/>
</dbReference>
<dbReference type="GeneID" id="5898"/>
<dbReference type="KEGG" id="hsa:5898"/>
<dbReference type="MANE-Select" id="ENST00000005257.7">
    <property type="protein sequence ID" value="ENSP00000005257.2"/>
    <property type="RefSeq nucleotide sequence ID" value="NM_005402.4"/>
    <property type="RefSeq protein sequence ID" value="NP_005393.2"/>
</dbReference>
<dbReference type="UCSC" id="uc003thd.4">
    <property type="organism name" value="human"/>
</dbReference>
<dbReference type="AGR" id="HGNC:9839"/>
<dbReference type="CTD" id="5898"/>
<dbReference type="DisGeNET" id="5898"/>
<dbReference type="GeneCards" id="RALA"/>
<dbReference type="HGNC" id="HGNC:9839">
    <property type="gene designation" value="RALA"/>
</dbReference>
<dbReference type="HPA" id="ENSG00000006451">
    <property type="expression patterns" value="Low tissue specificity"/>
</dbReference>
<dbReference type="MalaCards" id="RALA"/>
<dbReference type="MIM" id="179550">
    <property type="type" value="gene"/>
</dbReference>
<dbReference type="MIM" id="619311">
    <property type="type" value="phenotype"/>
</dbReference>
<dbReference type="neXtProt" id="NX_P11233"/>
<dbReference type="OpenTargets" id="ENSG00000006451"/>
<dbReference type="Orphanet" id="528084">
    <property type="disease" value="Non-specific syndromic intellectual disability"/>
</dbReference>
<dbReference type="PharmGKB" id="PA34197"/>
<dbReference type="VEuPathDB" id="HostDB:ENSG00000006451"/>
<dbReference type="eggNOG" id="KOG0395">
    <property type="taxonomic scope" value="Eukaryota"/>
</dbReference>
<dbReference type="GeneTree" id="ENSGT00940000155142"/>
<dbReference type="InParanoid" id="P11233"/>
<dbReference type="OMA" id="LASEWHC"/>
<dbReference type="OrthoDB" id="5976022at2759"/>
<dbReference type="PAN-GO" id="P11233">
    <property type="GO annotations" value="6 GO annotations based on evolutionary models"/>
</dbReference>
<dbReference type="PhylomeDB" id="P11233"/>
<dbReference type="TreeFam" id="TF312796"/>
<dbReference type="PathwayCommons" id="P11233"/>
<dbReference type="Reactome" id="R-HSA-1445148">
    <property type="pathway name" value="Translocation of SLC2A4 (GLUT4) to the plasma membrane"/>
</dbReference>
<dbReference type="Reactome" id="R-HSA-171007">
    <property type="pathway name" value="p38MAPK events"/>
</dbReference>
<dbReference type="Reactome" id="R-HSA-8950505">
    <property type="pathway name" value="Gene and protein expression by JAK-STAT signaling after Interleukin-12 stimulation"/>
</dbReference>
<dbReference type="SignaLink" id="P11233"/>
<dbReference type="SIGNOR" id="P11233"/>
<dbReference type="BioGRID-ORCS" id="5898">
    <property type="hits" value="20 hits in 1184 CRISPR screens"/>
</dbReference>
<dbReference type="CD-CODE" id="FB4E32DD">
    <property type="entry name" value="Presynaptic clusters and postsynaptic densities"/>
</dbReference>
<dbReference type="ChiTaRS" id="RALA">
    <property type="organism name" value="human"/>
</dbReference>
<dbReference type="EvolutionaryTrace" id="P11233"/>
<dbReference type="GeneWiki" id="RALA"/>
<dbReference type="GenomeRNAi" id="5898"/>
<dbReference type="Pharos" id="P11233">
    <property type="development level" value="Tbio"/>
</dbReference>
<dbReference type="PRO" id="PR:P11233"/>
<dbReference type="Proteomes" id="UP000005640">
    <property type="component" value="Chromosome 7"/>
</dbReference>
<dbReference type="RNAct" id="P11233">
    <property type="molecule type" value="protein"/>
</dbReference>
<dbReference type="Bgee" id="ENSG00000006451">
    <property type="expression patterns" value="Expressed in esophagus squamous epithelium and 198 other cell types or tissues"/>
</dbReference>
<dbReference type="ExpressionAtlas" id="P11233">
    <property type="expression patterns" value="baseline and differential"/>
</dbReference>
<dbReference type="GO" id="GO:0009986">
    <property type="term" value="C:cell surface"/>
    <property type="evidence" value="ECO:0000314"/>
    <property type="project" value="UniProtKB"/>
</dbReference>
<dbReference type="GO" id="GO:0032154">
    <property type="term" value="C:cleavage furrow"/>
    <property type="evidence" value="ECO:0000314"/>
    <property type="project" value="UniProtKB"/>
</dbReference>
<dbReference type="GO" id="GO:0030659">
    <property type="term" value="C:cytoplasmic vesicle membrane"/>
    <property type="evidence" value="ECO:0000304"/>
    <property type="project" value="Reactome"/>
</dbReference>
<dbReference type="GO" id="GO:0070062">
    <property type="term" value="C:extracellular exosome"/>
    <property type="evidence" value="ECO:0007005"/>
    <property type="project" value="UniProtKB"/>
</dbReference>
<dbReference type="GO" id="GO:0090543">
    <property type="term" value="C:Flemming body"/>
    <property type="evidence" value="ECO:0007669"/>
    <property type="project" value="UniProtKB-SubCell"/>
</dbReference>
<dbReference type="GO" id="GO:0005925">
    <property type="term" value="C:focal adhesion"/>
    <property type="evidence" value="ECO:0000314"/>
    <property type="project" value="HPA"/>
</dbReference>
<dbReference type="GO" id="GO:0005739">
    <property type="term" value="C:mitochondrion"/>
    <property type="evidence" value="ECO:0000314"/>
    <property type="project" value="UniProtKB"/>
</dbReference>
<dbReference type="GO" id="GO:0005886">
    <property type="term" value="C:plasma membrane"/>
    <property type="evidence" value="ECO:0000314"/>
    <property type="project" value="UniProtKB"/>
</dbReference>
<dbReference type="GO" id="GO:0098685">
    <property type="term" value="C:Schaffer collateral - CA1 synapse"/>
    <property type="evidence" value="ECO:0007669"/>
    <property type="project" value="Ensembl"/>
</dbReference>
<dbReference type="GO" id="GO:0097060">
    <property type="term" value="C:synaptic membrane"/>
    <property type="evidence" value="ECO:0007669"/>
    <property type="project" value="Ensembl"/>
</dbReference>
<dbReference type="GO" id="GO:0051117">
    <property type="term" value="F:ATPase binding"/>
    <property type="evidence" value="ECO:0000353"/>
    <property type="project" value="UniProtKB"/>
</dbReference>
<dbReference type="GO" id="GO:0031755">
    <property type="term" value="F:Edg-2 lysophosphatidic acid receptor binding"/>
    <property type="evidence" value="ECO:0000314"/>
    <property type="project" value="UniProtKB"/>
</dbReference>
<dbReference type="GO" id="GO:0003925">
    <property type="term" value="F:G protein activity"/>
    <property type="evidence" value="ECO:0007669"/>
    <property type="project" value="UniProtKB-EC"/>
</dbReference>
<dbReference type="GO" id="GO:0019003">
    <property type="term" value="F:GDP binding"/>
    <property type="evidence" value="ECO:0000314"/>
    <property type="project" value="UniProtKB"/>
</dbReference>
<dbReference type="GO" id="GO:0005525">
    <property type="term" value="F:GTP binding"/>
    <property type="evidence" value="ECO:0000314"/>
    <property type="project" value="UniProtKB"/>
</dbReference>
<dbReference type="GO" id="GO:0003924">
    <property type="term" value="F:GTPase activity"/>
    <property type="evidence" value="ECO:0000315"/>
    <property type="project" value="UniProtKB"/>
</dbReference>
<dbReference type="GO" id="GO:0017022">
    <property type="term" value="F:myosin binding"/>
    <property type="evidence" value="ECO:0000353"/>
    <property type="project" value="UniProtKB"/>
</dbReference>
<dbReference type="GO" id="GO:0031625">
    <property type="term" value="F:ubiquitin protein ligase binding"/>
    <property type="evidence" value="ECO:0000353"/>
    <property type="project" value="UniProtKB"/>
</dbReference>
<dbReference type="GO" id="GO:0051301">
    <property type="term" value="P:cell division"/>
    <property type="evidence" value="ECO:0007669"/>
    <property type="project" value="UniProtKB-KW"/>
</dbReference>
<dbReference type="GO" id="GO:0006935">
    <property type="term" value="P:chemotaxis"/>
    <property type="evidence" value="ECO:0000304"/>
    <property type="project" value="ProtInc"/>
</dbReference>
<dbReference type="GO" id="GO:0072655">
    <property type="term" value="P:establishment of protein localization to mitochondrion"/>
    <property type="evidence" value="ECO:0000315"/>
    <property type="project" value="UniProtKB"/>
</dbReference>
<dbReference type="GO" id="GO:0006887">
    <property type="term" value="P:exocytosis"/>
    <property type="evidence" value="ECO:0007669"/>
    <property type="project" value="UniProtKB-KW"/>
</dbReference>
<dbReference type="GO" id="GO:0051665">
    <property type="term" value="P:membrane raft localization"/>
    <property type="evidence" value="ECO:0000314"/>
    <property type="project" value="UniProtKB"/>
</dbReference>
<dbReference type="GO" id="GO:0001843">
    <property type="term" value="P:neural tube closure"/>
    <property type="evidence" value="ECO:0007669"/>
    <property type="project" value="Ensembl"/>
</dbReference>
<dbReference type="GO" id="GO:0045742">
    <property type="term" value="P:positive regulation of epidermal growth factor receptor signaling pathway"/>
    <property type="evidence" value="ECO:0000316"/>
    <property type="project" value="FlyBase"/>
</dbReference>
<dbReference type="GO" id="GO:0051491">
    <property type="term" value="P:positive regulation of filopodium assembly"/>
    <property type="evidence" value="ECO:0000314"/>
    <property type="project" value="BHF-UCL"/>
</dbReference>
<dbReference type="GO" id="GO:0090141">
    <property type="term" value="P:positive regulation of mitochondrial fission"/>
    <property type="evidence" value="ECO:0000315"/>
    <property type="project" value="UniProtKB"/>
</dbReference>
<dbReference type="GO" id="GO:0007265">
    <property type="term" value="P:Ras protein signal transduction"/>
    <property type="evidence" value="ECO:0000315"/>
    <property type="project" value="UniProtKB"/>
</dbReference>
<dbReference type="GO" id="GO:0031623">
    <property type="term" value="P:receptor internalization"/>
    <property type="evidence" value="ECO:0000316"/>
    <property type="project" value="FlyBase"/>
</dbReference>
<dbReference type="GO" id="GO:0032956">
    <property type="term" value="P:regulation of actin cytoskeleton organization"/>
    <property type="evidence" value="ECO:0000314"/>
    <property type="project" value="BHF-UCL"/>
</dbReference>
<dbReference type="GO" id="GO:0017157">
    <property type="term" value="P:regulation of exocytosis"/>
    <property type="evidence" value="ECO:0000314"/>
    <property type="project" value="UniProtKB"/>
</dbReference>
<dbReference type="GO" id="GO:0099149">
    <property type="term" value="P:regulation of postsynaptic neurotransmitter receptor internalization"/>
    <property type="evidence" value="ECO:0007669"/>
    <property type="project" value="Ensembl"/>
</dbReference>
<dbReference type="GO" id="GO:0007165">
    <property type="term" value="P:signal transduction"/>
    <property type="evidence" value="ECO:0000304"/>
    <property type="project" value="ProtInc"/>
</dbReference>
<dbReference type="CDD" id="cd04139">
    <property type="entry name" value="RalA_RalB"/>
    <property type="match status" value="1"/>
</dbReference>
<dbReference type="FunFam" id="3.40.50.300:FF:000203">
    <property type="entry name" value="Putative ras-related protein ral-a"/>
    <property type="match status" value="1"/>
</dbReference>
<dbReference type="Gene3D" id="3.40.50.300">
    <property type="entry name" value="P-loop containing nucleotide triphosphate hydrolases"/>
    <property type="match status" value="1"/>
</dbReference>
<dbReference type="InterPro" id="IPR027417">
    <property type="entry name" value="P-loop_NTPase"/>
</dbReference>
<dbReference type="InterPro" id="IPR005225">
    <property type="entry name" value="Small_GTP-bd"/>
</dbReference>
<dbReference type="InterPro" id="IPR001806">
    <property type="entry name" value="Small_GTPase"/>
</dbReference>
<dbReference type="InterPro" id="IPR020849">
    <property type="entry name" value="Small_GTPase_Ras-type"/>
</dbReference>
<dbReference type="NCBIfam" id="TIGR00231">
    <property type="entry name" value="small_GTP"/>
    <property type="match status" value="1"/>
</dbReference>
<dbReference type="PANTHER" id="PTHR24070">
    <property type="entry name" value="RAS, DI-RAS, AND RHEB FAMILY MEMBERS OF SMALL GTPASE SUPERFAMILY"/>
    <property type="match status" value="1"/>
</dbReference>
<dbReference type="Pfam" id="PF00071">
    <property type="entry name" value="Ras"/>
    <property type="match status" value="1"/>
</dbReference>
<dbReference type="PRINTS" id="PR00449">
    <property type="entry name" value="RASTRNSFRMNG"/>
</dbReference>
<dbReference type="SMART" id="SM00175">
    <property type="entry name" value="RAB"/>
    <property type="match status" value="1"/>
</dbReference>
<dbReference type="SMART" id="SM00176">
    <property type="entry name" value="RAN"/>
    <property type="match status" value="1"/>
</dbReference>
<dbReference type="SMART" id="SM00173">
    <property type="entry name" value="RAS"/>
    <property type="match status" value="1"/>
</dbReference>
<dbReference type="SMART" id="SM00174">
    <property type="entry name" value="RHO"/>
    <property type="match status" value="1"/>
</dbReference>
<dbReference type="SUPFAM" id="SSF52540">
    <property type="entry name" value="P-loop containing nucleoside triphosphate hydrolases"/>
    <property type="match status" value="1"/>
</dbReference>
<dbReference type="PROSITE" id="PS51421">
    <property type="entry name" value="RAS"/>
    <property type="match status" value="1"/>
</dbReference>
<protein>
    <recommendedName>
        <fullName>Ras-related protein Ral-A</fullName>
        <ecNumber evidence="15">3.6.5.2</ecNumber>
    </recommendedName>
</protein>
<accession>P11233</accession>
<accession>A4D1W3</accession>
<comment type="function">
    <text evidence="10 12 13 14 15">Multifunctional GTPase involved in a variety of cellular processes including gene expression, cell migration, cell proliferation, oncogenic transformation and membrane trafficking. Accomplishes its multiple functions by interacting with distinct downstream effectors (PubMed:18756269, PubMed:19306925, PubMed:20005108, PubMed:21822277, PubMed:30500825). Acts as a GTP sensor for GTP-dependent exocytosis of dense core vesicles. The RALA-exocyst complex regulates integrin-dependent membrane raft exocytosis and growth signaling (PubMed:20005108). Key regulator of LPAR1 signaling and competes with GRK2 for binding to LPAR1 thus affecting the signaling properties of the receptor. Required for anchorage-independent proliferation of transformed cells (PubMed:19306925). During mitosis, supports the stabilization and elongation of the intracellular bridge between dividing cells. Cooperates with EXOC2 to recruit other components of the exocyst to the early midbody (PubMed:18756269). During mitosis, also controls mitochondrial fission by recruiting to the mitochondrion RALBP1, which mediates the phosphorylation and activation of DNM1L by the mitotic kinase cyclin B-CDK1 (PubMed:21822277).</text>
</comment>
<comment type="catalytic activity">
    <reaction evidence="15">
        <text>GTP + H2O = GDP + phosphate + H(+)</text>
        <dbReference type="Rhea" id="RHEA:19669"/>
        <dbReference type="ChEBI" id="CHEBI:15377"/>
        <dbReference type="ChEBI" id="CHEBI:15378"/>
        <dbReference type="ChEBI" id="CHEBI:37565"/>
        <dbReference type="ChEBI" id="CHEBI:43474"/>
        <dbReference type="ChEBI" id="CHEBI:58189"/>
        <dbReference type="EC" id="3.6.5.2"/>
    </reaction>
    <physiologicalReaction direction="left-to-right" evidence="15">
        <dbReference type="Rhea" id="RHEA:19670"/>
    </physiologicalReaction>
</comment>
<comment type="activity regulation">
    <text>Alternates between an inactive form bound to GDP and an active form bound to GTP. Activated by a guanine nucleotide-exchange factor (GEF) and inactivated by a GTPase-activating protein (GAP).</text>
</comment>
<comment type="subunit">
    <text evidence="2 3 4 5 6 7 10 12 14 17">Interacts (via effector domain) with RALBP1; during mitosis, recruits RALBP1 to the mitochondrion where it promotes DNM1L phosphorylation and mitochondrial fission (PubMed:21822277, PubMed:7673236). Interacts with EXOC2/Sec5 and EXOC8/Exo84; binding to EXOC2 and EXOC8 is mutually exclusive (PubMed:14525976, PubMed:15920473, PubMed:18756269). Interacts with Clostridium exoenzyme C3 (PubMed:15809419, PubMed:16177825). Interacts with RALGPS1 (PubMed:10747847). Interacts with LPAR1 and LPAR2. Interacts with GRK2 in response to LPAR1 activation. RALA and GRK2 binding to LPAR1 is mutually exclusive (PubMed:19306925). Interacts with CDC42 (By similarity).</text>
</comment>
<comment type="interaction">
    <interactant intactId="EBI-1036803">
        <id>P11233</id>
    </interactant>
    <interactant intactId="EBI-350145">
        <id>P01112</id>
        <label>HRAS</label>
    </interactant>
    <organismsDiffer>false</organismsDiffer>
    <experiments>2</experiments>
</comment>
<comment type="interaction">
    <interactant intactId="EBI-1036803">
        <id>P11233</id>
    </interactant>
    <interactant intactId="EBI-357094">
        <id>P30154</id>
        <label>PPP2R1B</label>
    </interactant>
    <organismsDiffer>false</organismsDiffer>
    <experiments>6</experiments>
</comment>
<comment type="interaction">
    <interactant intactId="EBI-1036803">
        <id>P11233</id>
    </interactant>
    <interactant intactId="EBI-749285">
        <id>Q15311</id>
        <label>RALBP1</label>
    </interactant>
    <organismsDiffer>false</organismsDiffer>
    <experiments>6</experiments>
</comment>
<comment type="interaction">
    <interactant intactId="EBI-1036803">
        <id>P11233</id>
    </interactant>
    <interactant intactId="EBI-1036795">
        <id>O54921</id>
        <label>Exoc2</label>
    </interactant>
    <organismsDiffer>true</organismsDiffer>
    <experiments>2</experiments>
</comment>
<comment type="subcellular location">
    <subcellularLocation>
        <location evidence="9 10 12">Cell membrane</location>
        <topology evidence="9">Lipid-anchor</topology>
        <orientation>Cytoplasmic side</orientation>
    </subcellularLocation>
    <subcellularLocation>
        <location evidence="10">Cleavage furrow</location>
    </subcellularLocation>
    <subcellularLocation>
        <location evidence="8">Midbody</location>
        <location evidence="8">Midbody ring</location>
    </subcellularLocation>
    <subcellularLocation>
        <location evidence="14">Mitochondrion</location>
    </subcellularLocation>
    <text evidence="8 10 12 14">Predominantly at the cell surface in the absence of LPA. In the presence of LPA, colocalizes with LPAR1 and LPAR2 in endocytic vesicles (PubMed:19306925). May colocalize with CNTRL/centriolin at the midbody ring (PubMed:16213214). However, localization at the midbody at late cytokinesis was not confirmed (PubMed:18756269). Relocalizes to the mitochondrion during mitosis where it regulates mitochondrial fission (PubMed:21822277).</text>
</comment>
<comment type="induction">
    <text evidence="12">Activated in an LPA-dependent manner by LPAR1 and in an LPA-independent manner by LPAR2.</text>
</comment>
<comment type="PTM">
    <text evidence="14">Phosphorylated. Phosphorylation at Ser-194 by AURKA/Aurora kinase A, during mitosis, induces RALA localization to the mitochondrion where it regulates mitochondrial fission.</text>
</comment>
<comment type="PTM">
    <text evidence="9 11">Prenylation is essential for membrane localization. The geranylgeranylated form and the farnesylated mutant do not undergo alternative prenylation in response to geranylgeranyltransferase I inhibitors (GGTIs) and farnesyltransferase I inhibitors (FTIs).</text>
</comment>
<comment type="PTM">
    <text evidence="18">(Microbial infection) Glucosylated at Thr-46 by P.sordellii toxin TcsL from strain 6018 (PubMed:8858106). Monoglucosylation completely prevents the recognition of the downstream effector, blocking the GTPases in their inactive form (PubMed:8858106). Not glucosylated by TcsL from strain VPI 9048 (PubMed:8858106).</text>
</comment>
<comment type="disease" evidence="15 16">
    <disease id="DI-06098">
        <name>Hiatt-Neu-Cooper neurodevelopmental syndrome</name>
        <acronym>HINCONS</acronym>
        <description>An autosomal dominant neurodevelopmental disorder characterized by global developmental delay, delayed walking or inability to walk, impaired intellectual development, poor or absent speech, axial hypotonia, and facial dysmorphism. Additional variable features may include seizures, autistic or behavioral abnormalities, and brain abnormalities.</description>
        <dbReference type="MIM" id="619311"/>
    </disease>
    <text>The disease is caused by variants affecting the gene represented in this entry.</text>
</comment>
<comment type="similarity">
    <text evidence="19">Belongs to the small GTPase superfamily. Ras family.</text>
</comment>
<sequence length="206" mass="23567">MAANKPKGQNSLALHKVIMVGSGGVGKSALTLQFMYDEFVEDYEPTKADSYRKKVVLDGEEVQIDILDTAGQEDYAAIRDNYFRSGEGFLCVFSITEMESFAATADFREQILRVKEDENVPFLLVGNKSDLEDKRQVSVEEAKNRAEQWNVNYVETSAKTRANVDKVFFDLMREIRARKMEDSKEKNGKKKRKSLAKRIRERCCIL</sequence>
<proteinExistence type="evidence at protein level"/>
<gene>
    <name type="primary">RALA</name>
    <name type="synonym">RAL</name>
</gene>
<organism>
    <name type="scientific">Homo sapiens</name>
    <name type="common">Human</name>
    <dbReference type="NCBI Taxonomy" id="9606"/>
    <lineage>
        <taxon>Eukaryota</taxon>
        <taxon>Metazoa</taxon>
        <taxon>Chordata</taxon>
        <taxon>Craniata</taxon>
        <taxon>Vertebrata</taxon>
        <taxon>Euteleostomi</taxon>
        <taxon>Mammalia</taxon>
        <taxon>Eutheria</taxon>
        <taxon>Euarchontoglires</taxon>
        <taxon>Primates</taxon>
        <taxon>Haplorrhini</taxon>
        <taxon>Catarrhini</taxon>
        <taxon>Hominidae</taxon>
        <taxon>Homo</taxon>
    </lineage>
</organism>
<evidence type="ECO:0000250" key="1"/>
<evidence type="ECO:0000250" key="2">
    <source>
        <dbReference type="UniProtKB" id="P63322"/>
    </source>
</evidence>
<evidence type="ECO:0000269" key="3">
    <source>
    </source>
</evidence>
<evidence type="ECO:0000269" key="4">
    <source>
    </source>
</evidence>
<evidence type="ECO:0000269" key="5">
    <source>
    </source>
</evidence>
<evidence type="ECO:0000269" key="6">
    <source>
    </source>
</evidence>
<evidence type="ECO:0000269" key="7">
    <source>
    </source>
</evidence>
<evidence type="ECO:0000269" key="8">
    <source>
    </source>
</evidence>
<evidence type="ECO:0000269" key="9">
    <source>
    </source>
</evidence>
<evidence type="ECO:0000269" key="10">
    <source>
    </source>
</evidence>
<evidence type="ECO:0000269" key="11">
    <source>
    </source>
</evidence>
<evidence type="ECO:0000269" key="12">
    <source>
    </source>
</evidence>
<evidence type="ECO:0000269" key="13">
    <source>
    </source>
</evidence>
<evidence type="ECO:0000269" key="14">
    <source>
    </source>
</evidence>
<evidence type="ECO:0000269" key="15">
    <source>
    </source>
</evidence>
<evidence type="ECO:0000269" key="16">
    <source>
    </source>
</evidence>
<evidence type="ECO:0000269" key="17">
    <source>
    </source>
</evidence>
<evidence type="ECO:0000269" key="18">
    <source>
    </source>
</evidence>
<evidence type="ECO:0000305" key="19"/>
<evidence type="ECO:0000305" key="20">
    <source>
    </source>
</evidence>
<evidence type="ECO:0007829" key="21">
    <source>
        <dbReference type="PDB" id="6P0I"/>
    </source>
</evidence>
<evidence type="ECO:0007829" key="22">
    <source>
        <dbReference type="PDB" id="7NQC"/>
    </source>
</evidence>
<feature type="chain" id="PRO_0000082693" description="Ras-related protein Ral-A">
    <location>
        <begin position="1"/>
        <end position="203"/>
    </location>
</feature>
<feature type="propeptide" id="PRO_0000281344" description="Removed in mature form" evidence="1">
    <location>
        <begin position="204"/>
        <end position="206"/>
    </location>
</feature>
<feature type="short sequence motif" description="Effector region">
    <location>
        <begin position="43"/>
        <end position="51"/>
    </location>
</feature>
<feature type="binding site" evidence="5 7">
    <location>
        <begin position="24"/>
        <end position="29"/>
    </location>
    <ligand>
        <name>GTP</name>
        <dbReference type="ChEBI" id="CHEBI:37565"/>
    </ligand>
</feature>
<feature type="binding site" evidence="5 7">
    <location>
        <begin position="40"/>
        <end position="46"/>
    </location>
    <ligand>
        <name>GTP</name>
        <dbReference type="ChEBI" id="CHEBI:37565"/>
    </ligand>
</feature>
<feature type="binding site" evidence="5 7">
    <location>
        <begin position="127"/>
        <end position="130"/>
    </location>
    <ligand>
        <name>GTP</name>
        <dbReference type="ChEBI" id="CHEBI:37565"/>
    </ligand>
</feature>
<feature type="modified residue" description="Phosphoserine; by AURKA" evidence="20">
    <location>
        <position position="194"/>
    </location>
</feature>
<feature type="modified residue" description="Cysteine methyl ester" evidence="1">
    <location>
        <position position="203"/>
    </location>
</feature>
<feature type="lipid moiety-binding region" description="S-geranylgeranyl cysteine" evidence="9 11">
    <location>
        <position position="203"/>
    </location>
</feature>
<feature type="glycosylation site" description="(Microbial infection) O-linked (Glc) threonine; by P.sordellii toxin TcsL" evidence="18">
    <location>
        <position position="46"/>
    </location>
</feature>
<feature type="sequence variant" id="VAR_085759" description="In HINCONS; decreased GTPase activity; decreased RALA effector binding; dbSNP:rs1554297905." evidence="15">
    <original>V</original>
    <variation>L</variation>
    <location>
        <position position="25"/>
    </location>
</feature>
<feature type="sequence variant" id="VAR_085760" description="In HINCONS; decreased GTPase activity; decreased RALA effector binding; dbSNP:rs1554297905." evidence="15 16">
    <original>V</original>
    <variation>M</variation>
    <location>
        <position position="25"/>
    </location>
</feature>
<feature type="sequence variant" id="VAR_085761" description="In HINCONS; dbSNP:rs2116098601." evidence="15">
    <original>K</original>
    <variation>R</variation>
    <location>
        <position position="128"/>
    </location>
</feature>
<feature type="sequence variant" id="VAR_085762" description="In HINCONS; decreased GTPase activity; decreased RALA effector binding; dbSNP:rs2116098628." evidence="15">
    <original>D</original>
    <variation>G</variation>
    <location>
        <position position="130"/>
    </location>
</feature>
<feature type="sequence variant" id="VAR_085763" description="In HINCONS; decreased GTPase activity; increased RALA effector binding; dbSNP:rs2116098885." evidence="15">
    <original>S</original>
    <variation>A</variation>
    <location>
        <position position="157"/>
    </location>
</feature>
<feature type="sequence variant" id="VAR_085764" description="In HINCONS; uncertain significance." evidence="15">
    <location>
        <position position="158"/>
    </location>
</feature>
<feature type="sequence variant" id="VAR_085765" description="In HINCONS; uncertain significance." evidence="15">
    <location>
        <begin position="176"/>
        <end position="206"/>
    </location>
</feature>
<feature type="mutagenesis site" description="Impaired cytokinesis, as shown by increased number of binucleate cells. Impaired cytokinesis; when associated with L-72." evidence="10">
    <location>
        <begin position="1"/>
        <end position="11"/>
    </location>
</feature>
<feature type="mutagenesis site" description="Impaired cytokinesis, as shown by increased number of binucleate cells. No effect on interaction with EXOC2 and EXOC8. No effect on cytokinesis; when associated with R-38 or W-48. Decreased interaction with EXOC2 and EXOC8; when associated with R-38 or W-48." evidence="10">
    <original>G</original>
    <variation>V</variation>
    <location>
        <position position="23"/>
    </location>
</feature>
<feature type="mutagenesis site" description="Impaired cytokinesis, as shown by increased number of binucleate cells. No effect on cytokinesis; when associated with V-23. Decreased interaction with EXOC2 and EXOC8; when associated with V-23." evidence="10">
    <original>E</original>
    <variation>R</variation>
    <location>
        <position position="38"/>
    </location>
</feature>
<feature type="mutagenesis site" description="Abolished monoglucosylation by P.sordellii toxin TcsL." evidence="18">
    <original>T</original>
    <variation>A</variation>
    <location>
        <position position="46"/>
    </location>
</feature>
<feature type="mutagenesis site" description="Strongly reduces interaction with EXOC8." evidence="6">
    <original>K</original>
    <variation>E</variation>
    <location>
        <position position="47"/>
    </location>
</feature>
<feature type="mutagenesis site" description="No effect on interaction with EXOC8." evidence="6">
    <original>K</original>
    <variation>I</variation>
    <location>
        <position position="47"/>
    </location>
</feature>
<feature type="mutagenesis site" description="Impaired cytokinesis, as shown by increased number of binucleate cells. No effect on cytokinesis; when associated with V-23. Decreased interaction with EXOC2 and EXOC8; when associated with V-23." evidence="10">
    <original>A</original>
    <variation>W</variation>
    <location>
        <position position="48"/>
    </location>
</feature>
<feature type="mutagenesis site" description="Strongly reduces interaction with EXOC8." evidence="6">
    <original>A</original>
    <variation>W</variation>
    <location>
        <position position="48"/>
    </location>
</feature>
<feature type="mutagenesis site" description="No effect on cytokinesis; when associated with L-72." evidence="10">
    <original>D</original>
    <variation>E</variation>
    <location>
        <position position="49"/>
    </location>
</feature>
<feature type="mutagenesis site" description="No effect on cytokinesis. Impaired cytokinesis, as shown by increased number of binucleate cells; when associated with L-72." evidence="10">
    <original>D</original>
    <variation>N</variation>
    <location>
        <position position="49"/>
    </location>
</feature>
<feature type="mutagenesis site" description="Strongly reduces interaction with EXOC8." evidence="6">
    <original>S</original>
    <variation>W</variation>
    <location>
        <position position="50"/>
    </location>
</feature>
<feature type="mutagenesis site" description="Strongly reduces interaction with EXOC8." evidence="6">
    <original>R</original>
    <variation>A</variation>
    <location>
        <position position="52"/>
    </location>
</feature>
<feature type="mutagenesis site" description="No effect on interaction with EXOC8." evidence="6">
    <original>R</original>
    <variation>W</variation>
    <location>
        <position position="52"/>
    </location>
</feature>
<feature type="mutagenesis site" description="Impaired cytokinesis, as shown by increased number of binucleate cells. Impaired cytokinesis; when associated with N-49 or 1-M--S-11. No effect on cytokinesis; when associated with E-49." evidence="10">
    <original>Q</original>
    <variation>L</variation>
    <location>
        <position position="72"/>
    </location>
</feature>
<feature type="mutagenesis site" description="No effect on interaction with EXOC8." evidence="6">
    <original>N</original>
    <variation>A</variation>
    <location>
        <position position="81"/>
    </location>
</feature>
<feature type="mutagenesis site" description="Strongly reduces interaction with EXOC8." evidence="6">
    <original>N</original>
    <variation>R</variation>
    <location>
        <position position="81"/>
    </location>
</feature>
<feature type="mutagenesis site" description="Decreased localization to mitochondrion. Loss of function in mitochondrial fission." evidence="14">
    <original>S</original>
    <variation>A</variation>
    <location>
        <position position="194"/>
    </location>
</feature>
<feature type="mutagenesis site" description="Increased localization to mitochondrion." evidence="14">
    <original>S</original>
    <variation>D</variation>
    <location>
        <position position="194"/>
    </location>
</feature>
<feature type="mutagenesis site" description="Loss of geranylgeranylation and membrane localization." evidence="9">
    <original>C</original>
    <variation>S</variation>
    <location>
        <position position="203"/>
    </location>
</feature>
<feature type="mutagenesis site" description="Converts geranyl-geranylation to farnesylation. No effect on membrane localization. Fails to deflect GGTI-induced apoptosis of adherent cell cultures, but rescues anchorage-independent cell proliferation." evidence="9">
    <original>L</original>
    <variation>S</variation>
    <location>
        <position position="206"/>
    </location>
</feature>
<feature type="sequence conflict" description="In Ref. 2; AAA36542 and 3; AAM12624." evidence="19" ref="2 3">
    <original>MA</original>
    <variation>MVDYL</variation>
    <location>
        <begin position="1"/>
        <end position="2"/>
    </location>
</feature>
<feature type="strand" evidence="21">
    <location>
        <begin position="13"/>
        <end position="20"/>
    </location>
</feature>
<feature type="helix" evidence="21">
    <location>
        <begin position="27"/>
        <end position="36"/>
    </location>
</feature>
<feature type="strand" evidence="21">
    <location>
        <begin position="49"/>
        <end position="57"/>
    </location>
</feature>
<feature type="strand" evidence="21">
    <location>
        <begin position="60"/>
        <end position="68"/>
    </location>
</feature>
<feature type="helix" evidence="21">
    <location>
        <begin position="76"/>
        <end position="85"/>
    </location>
</feature>
<feature type="strand" evidence="21">
    <location>
        <begin position="87"/>
        <end position="94"/>
    </location>
</feature>
<feature type="helix" evidence="21">
    <location>
        <begin position="98"/>
        <end position="115"/>
    </location>
</feature>
<feature type="strand" evidence="21">
    <location>
        <begin position="120"/>
        <end position="127"/>
    </location>
</feature>
<feature type="helix" evidence="21">
    <location>
        <begin position="132"/>
        <end position="134"/>
    </location>
</feature>
<feature type="helix" evidence="21">
    <location>
        <begin position="139"/>
        <end position="149"/>
    </location>
</feature>
<feature type="strand" evidence="21">
    <location>
        <begin position="152"/>
        <end position="156"/>
    </location>
</feature>
<feature type="turn" evidence="21">
    <location>
        <begin position="158"/>
        <end position="160"/>
    </location>
</feature>
<feature type="helix" evidence="21">
    <location>
        <begin position="164"/>
        <end position="178"/>
    </location>
</feature>
<feature type="strand" evidence="22">
    <location>
        <begin position="189"/>
        <end position="191"/>
    </location>
</feature>
<feature type="turn" evidence="22">
    <location>
        <begin position="196"/>
        <end position="200"/>
    </location>
</feature>
<keyword id="KW-0002">3D-structure</keyword>
<keyword id="KW-0131">Cell cycle</keyword>
<keyword id="KW-0132">Cell division</keyword>
<keyword id="KW-1003">Cell membrane</keyword>
<keyword id="KW-0225">Disease variant</keyword>
<keyword id="KW-0268">Exocytosis</keyword>
<keyword id="KW-0325">Glycoprotein</keyword>
<keyword id="KW-0342">GTP-binding</keyword>
<keyword id="KW-0378">Hydrolase</keyword>
<keyword id="KW-0991">Intellectual disability</keyword>
<keyword id="KW-0449">Lipoprotein</keyword>
<keyword id="KW-0472">Membrane</keyword>
<keyword id="KW-0488">Methylation</keyword>
<keyword id="KW-0496">Mitochondrion</keyword>
<keyword id="KW-0547">Nucleotide-binding</keyword>
<keyword id="KW-0597">Phosphoprotein</keyword>
<keyword id="KW-0636">Prenylation</keyword>
<keyword id="KW-1267">Proteomics identification</keyword>
<keyword id="KW-1185">Reference proteome</keyword>